<name>CYB_PEA</name>
<reference key="1">
    <citation type="journal article" date="1999" name="Mol. Gen. Genet.">
        <title>Cotranscription of the rpl5-rps14-cob gene cluster in pea mitochondria.</title>
        <authorList>
            <person name="Hoffmann M."/>
            <person name="Dombrowski S."/>
            <person name="Guha C."/>
            <person name="Binder S."/>
        </authorList>
    </citation>
    <scope>NUCLEOTIDE SEQUENCE [GENOMIC DNA]</scope>
    <source>
        <strain>cv. Progress No. 9</strain>
    </source>
</reference>
<dbReference type="EMBL" id="AJ132231">
    <property type="protein sequence ID" value="CAA10613.1"/>
    <property type="molecule type" value="Genomic_DNA"/>
</dbReference>
<dbReference type="SMR" id="Q9ZZT8"/>
<dbReference type="GO" id="GO:0005743">
    <property type="term" value="C:mitochondrial inner membrane"/>
    <property type="evidence" value="ECO:0007669"/>
    <property type="project" value="UniProtKB-SubCell"/>
</dbReference>
<dbReference type="GO" id="GO:0045275">
    <property type="term" value="C:respiratory chain complex III"/>
    <property type="evidence" value="ECO:0007669"/>
    <property type="project" value="InterPro"/>
</dbReference>
<dbReference type="GO" id="GO:0046872">
    <property type="term" value="F:metal ion binding"/>
    <property type="evidence" value="ECO:0007669"/>
    <property type="project" value="UniProtKB-KW"/>
</dbReference>
<dbReference type="GO" id="GO:0008121">
    <property type="term" value="F:ubiquinol-cytochrome-c reductase activity"/>
    <property type="evidence" value="ECO:0007669"/>
    <property type="project" value="InterPro"/>
</dbReference>
<dbReference type="GO" id="GO:0006122">
    <property type="term" value="P:mitochondrial electron transport, ubiquinol to cytochrome c"/>
    <property type="evidence" value="ECO:0007669"/>
    <property type="project" value="TreeGrafter"/>
</dbReference>
<dbReference type="CDD" id="cd00290">
    <property type="entry name" value="cytochrome_b_C"/>
    <property type="match status" value="1"/>
</dbReference>
<dbReference type="CDD" id="cd00284">
    <property type="entry name" value="Cytochrome_b_N"/>
    <property type="match status" value="1"/>
</dbReference>
<dbReference type="FunFam" id="1.20.810.10:FF:000006">
    <property type="entry name" value="Cytochrome b"/>
    <property type="match status" value="1"/>
</dbReference>
<dbReference type="Gene3D" id="1.20.810.10">
    <property type="entry name" value="Cytochrome Bc1 Complex, Chain C"/>
    <property type="match status" value="1"/>
</dbReference>
<dbReference type="InterPro" id="IPR005798">
    <property type="entry name" value="Cyt_b/b6_C"/>
</dbReference>
<dbReference type="InterPro" id="IPR036150">
    <property type="entry name" value="Cyt_b/b6_C_sf"/>
</dbReference>
<dbReference type="InterPro" id="IPR005797">
    <property type="entry name" value="Cyt_b/b6_N"/>
</dbReference>
<dbReference type="InterPro" id="IPR027387">
    <property type="entry name" value="Cytb/b6-like_sf"/>
</dbReference>
<dbReference type="InterPro" id="IPR030689">
    <property type="entry name" value="Cytochrome_b"/>
</dbReference>
<dbReference type="InterPro" id="IPR048260">
    <property type="entry name" value="Cytochrome_b_C_euk/bac"/>
</dbReference>
<dbReference type="InterPro" id="IPR048259">
    <property type="entry name" value="Cytochrome_b_N_euk/bac"/>
</dbReference>
<dbReference type="InterPro" id="IPR016174">
    <property type="entry name" value="Di-haem_cyt_TM"/>
</dbReference>
<dbReference type="PANTHER" id="PTHR19271">
    <property type="entry name" value="CYTOCHROME B"/>
    <property type="match status" value="1"/>
</dbReference>
<dbReference type="PANTHER" id="PTHR19271:SF16">
    <property type="entry name" value="CYTOCHROME B"/>
    <property type="match status" value="1"/>
</dbReference>
<dbReference type="Pfam" id="PF00032">
    <property type="entry name" value="Cytochrom_B_C"/>
    <property type="match status" value="1"/>
</dbReference>
<dbReference type="Pfam" id="PF00033">
    <property type="entry name" value="Cytochrome_B"/>
    <property type="match status" value="1"/>
</dbReference>
<dbReference type="PIRSF" id="PIRSF038885">
    <property type="entry name" value="COB"/>
    <property type="match status" value="1"/>
</dbReference>
<dbReference type="SUPFAM" id="SSF81648">
    <property type="entry name" value="a domain/subunit of cytochrome bc1 complex (Ubiquinol-cytochrome c reductase)"/>
    <property type="match status" value="1"/>
</dbReference>
<dbReference type="SUPFAM" id="SSF81342">
    <property type="entry name" value="Transmembrane di-heme cytochromes"/>
    <property type="match status" value="1"/>
</dbReference>
<dbReference type="PROSITE" id="PS51003">
    <property type="entry name" value="CYTB_CTER"/>
    <property type="match status" value="1"/>
</dbReference>
<dbReference type="PROSITE" id="PS51002">
    <property type="entry name" value="CYTB_NTER"/>
    <property type="match status" value="1"/>
</dbReference>
<geneLocation type="mitochondrion"/>
<keyword id="KW-0249">Electron transport</keyword>
<keyword id="KW-0349">Heme</keyword>
<keyword id="KW-0408">Iron</keyword>
<keyword id="KW-0472">Membrane</keyword>
<keyword id="KW-0479">Metal-binding</keyword>
<keyword id="KW-0496">Mitochondrion</keyword>
<keyword id="KW-0999">Mitochondrion inner membrane</keyword>
<keyword id="KW-0679">Respiratory chain</keyword>
<keyword id="KW-0812">Transmembrane</keyword>
<keyword id="KW-1133">Transmembrane helix</keyword>
<keyword id="KW-0813">Transport</keyword>
<keyword id="KW-0830">Ubiquinone</keyword>
<evidence type="ECO:0000250" key="1"/>
<evidence type="ECO:0000250" key="2">
    <source>
        <dbReference type="UniProtKB" id="P00157"/>
    </source>
</evidence>
<evidence type="ECO:0000250" key="3">
    <source>
        <dbReference type="UniProtKB" id="P00163"/>
    </source>
</evidence>
<evidence type="ECO:0000255" key="4">
    <source>
        <dbReference type="PROSITE-ProRule" id="PRU00967"/>
    </source>
</evidence>
<evidence type="ECO:0000255" key="5">
    <source>
        <dbReference type="PROSITE-ProRule" id="PRU00968"/>
    </source>
</evidence>
<sequence length="392" mass="44090">MTIRNQRLSLLKQPISSTLNQHLIDYPTPSNLSYWWGFGSLAGICLVIQIVTGVFLAMHYTPHVDLAFNSVEHVMRDVEGGWLLRYMHANGASMFLIVVHLHIFRGLYHASYSSPREFVRCLGVVIFLLMIVTAFTGYVPPWGQMSFWGATVITSLASAIPVVGDTIVTWLWGGFSVDNATLNRFFSLHHLLPFILVGASLLHLAALHQYGSNNPLGVHSEMDQISFYPYFYVKDLVGWVAFAIFFSIWIFYAPNVLGHPDNYIPANPMPTPPHIVPEWYFLPIHAILRSIPDKSGGVAAIAPVFICLLALPFFKSMYVRSSSFRPIHQGIFWLLLADRLLLGWIGCQPVEAPFVTIGQIPPFVFFLFFAITPIPGRVGRGIPNYYTDETDQ</sequence>
<proteinExistence type="inferred from homology"/>
<feature type="chain" id="PRO_0000061363" description="Cytochrome b">
    <location>
        <begin position="1"/>
        <end position="392"/>
    </location>
</feature>
<feature type="transmembrane region" description="Helical" evidence="3">
    <location>
        <begin position="38"/>
        <end position="58"/>
    </location>
</feature>
<feature type="transmembrane region" description="Helical" evidence="3">
    <location>
        <begin position="82"/>
        <end position="104"/>
    </location>
</feature>
<feature type="transmembrane region" description="Helical" evidence="3">
    <location>
        <begin position="119"/>
        <end position="139"/>
    </location>
</feature>
<feature type="transmembrane region" description="Helical" evidence="3">
    <location>
        <begin position="185"/>
        <end position="205"/>
    </location>
</feature>
<feature type="transmembrane region" description="Helical" evidence="3">
    <location>
        <begin position="231"/>
        <end position="251"/>
    </location>
</feature>
<feature type="transmembrane region" description="Helical" evidence="3">
    <location>
        <begin position="295"/>
        <end position="315"/>
    </location>
</feature>
<feature type="transmembrane region" description="Helical" evidence="3">
    <location>
        <begin position="327"/>
        <end position="347"/>
    </location>
</feature>
<feature type="transmembrane region" description="Helical" evidence="3">
    <location>
        <begin position="354"/>
        <end position="373"/>
    </location>
</feature>
<feature type="binding site" description="axial binding residue" evidence="3">
    <location>
        <position position="88"/>
    </location>
    <ligand>
        <name>heme b</name>
        <dbReference type="ChEBI" id="CHEBI:60344"/>
        <label>b562</label>
    </ligand>
    <ligandPart>
        <name>Fe</name>
        <dbReference type="ChEBI" id="CHEBI:18248"/>
    </ligandPart>
</feature>
<feature type="binding site" description="axial binding residue" evidence="3">
    <location>
        <position position="102"/>
    </location>
    <ligand>
        <name>heme b</name>
        <dbReference type="ChEBI" id="CHEBI:60344"/>
        <label>b566</label>
    </ligand>
    <ligandPart>
        <name>Fe</name>
        <dbReference type="ChEBI" id="CHEBI:18248"/>
    </ligandPart>
</feature>
<feature type="binding site" description="axial binding residue" evidence="3">
    <location>
        <position position="189"/>
    </location>
    <ligand>
        <name>heme b</name>
        <dbReference type="ChEBI" id="CHEBI:60344"/>
        <label>b562</label>
    </ligand>
    <ligandPart>
        <name>Fe</name>
        <dbReference type="ChEBI" id="CHEBI:18248"/>
    </ligandPart>
</feature>
<feature type="binding site" description="axial binding residue" evidence="3">
    <location>
        <position position="203"/>
    </location>
    <ligand>
        <name>heme b</name>
        <dbReference type="ChEBI" id="CHEBI:60344"/>
        <label>b566</label>
    </ligand>
    <ligandPart>
        <name>Fe</name>
        <dbReference type="ChEBI" id="CHEBI:18248"/>
    </ligandPart>
</feature>
<feature type="binding site" evidence="2">
    <location>
        <position position="208"/>
    </location>
    <ligand>
        <name>a ubiquinone</name>
        <dbReference type="ChEBI" id="CHEBI:16389"/>
    </ligand>
</feature>
<accession>Q9ZZT8</accession>
<protein>
    <recommendedName>
        <fullName>Cytochrome b</fullName>
    </recommendedName>
    <alternativeName>
        <fullName>Complex III subunit 3</fullName>
    </alternativeName>
    <alternativeName>
        <fullName>Complex III subunit III</fullName>
    </alternativeName>
    <alternativeName>
        <fullName>Cytochrome b-c1 complex subunit 3</fullName>
    </alternativeName>
    <alternativeName>
        <fullName>Ubiquinol-cytochrome-c reductase complex cytochrome b subunit</fullName>
    </alternativeName>
</protein>
<gene>
    <name type="primary">MT-CYB</name>
    <name type="synonym">COB</name>
    <name type="synonym">CYTB</name>
    <name type="synonym">MTCYB</name>
</gene>
<organism>
    <name type="scientific">Pisum sativum</name>
    <name type="common">Garden pea</name>
    <name type="synonym">Lathyrus oleraceus</name>
    <dbReference type="NCBI Taxonomy" id="3888"/>
    <lineage>
        <taxon>Eukaryota</taxon>
        <taxon>Viridiplantae</taxon>
        <taxon>Streptophyta</taxon>
        <taxon>Embryophyta</taxon>
        <taxon>Tracheophyta</taxon>
        <taxon>Spermatophyta</taxon>
        <taxon>Magnoliopsida</taxon>
        <taxon>eudicotyledons</taxon>
        <taxon>Gunneridae</taxon>
        <taxon>Pentapetalae</taxon>
        <taxon>rosids</taxon>
        <taxon>fabids</taxon>
        <taxon>Fabales</taxon>
        <taxon>Fabaceae</taxon>
        <taxon>Papilionoideae</taxon>
        <taxon>50 kb inversion clade</taxon>
        <taxon>NPAAA clade</taxon>
        <taxon>Hologalegina</taxon>
        <taxon>IRL clade</taxon>
        <taxon>Fabeae</taxon>
        <taxon>Pisum</taxon>
    </lineage>
</organism>
<comment type="function">
    <text evidence="3">Component of the ubiquinol-cytochrome c reductase complex (complex III or cytochrome b-c1 complex) that is part of the mitochondrial respiratory chain. The b-c1 complex mediates electron transfer from ubiquinol to cytochrome c. Contributes to the generation of a proton gradient across the mitochondrial membrane that is then used for ATP synthesis.</text>
</comment>
<comment type="cofactor">
    <cofactor evidence="3">
        <name>heme b</name>
        <dbReference type="ChEBI" id="CHEBI:60344"/>
    </cofactor>
    <text evidence="3">Binds 2 heme b groups non-covalently.</text>
</comment>
<comment type="subunit">
    <text evidence="1">The main subunits of complex b-c1 are: cytochrome b, cytochrome c1 and the Rieske protein.</text>
</comment>
<comment type="subcellular location">
    <subcellularLocation>
        <location evidence="3">Mitochondrion inner membrane</location>
        <topology evidence="3">Multi-pass membrane protein</topology>
    </subcellularLocation>
</comment>
<comment type="miscellaneous">
    <text evidence="1">Heme 1 (or BL or b562) is low-potential and absorbs at about 562 nm, and heme 2 (or BH or b566) is high-potential and absorbs at about 566 nm.</text>
</comment>
<comment type="similarity">
    <text evidence="4 5">Belongs to the cytochrome b family.</text>
</comment>
<comment type="caution">
    <text evidence="3">The protein contains only eight transmembrane helices, not nine as predicted by bioinformatics tools.</text>
</comment>